<protein>
    <recommendedName>
        <fullName evidence="1">Histidine biosynthesis bifunctional protein HisIE</fullName>
    </recommendedName>
    <domain>
        <recommendedName>
            <fullName evidence="1">Phosphoribosyl-AMP cyclohydrolase</fullName>
            <shortName evidence="1">PRA-CH</shortName>
            <ecNumber evidence="1">3.5.4.19</ecNumber>
        </recommendedName>
    </domain>
    <domain>
        <recommendedName>
            <fullName evidence="1">Phosphoribosyl-ATP pyrophosphatase</fullName>
            <shortName evidence="1">PRA-PH</shortName>
            <ecNumber evidence="1">3.6.1.31</ecNumber>
        </recommendedName>
    </domain>
</protein>
<evidence type="ECO:0000255" key="1">
    <source>
        <dbReference type="HAMAP-Rule" id="MF_01019"/>
    </source>
</evidence>
<keyword id="KW-0028">Amino-acid biosynthesis</keyword>
<keyword id="KW-0067">ATP-binding</keyword>
<keyword id="KW-0963">Cytoplasm</keyword>
<keyword id="KW-0368">Histidine biosynthesis</keyword>
<keyword id="KW-0378">Hydrolase</keyword>
<keyword id="KW-0511">Multifunctional enzyme</keyword>
<keyword id="KW-0547">Nucleotide-binding</keyword>
<keyword id="KW-1185">Reference proteome</keyword>
<organism>
    <name type="scientific">Xanthomonas campestris pv. campestris (strain ATCC 33913 / DSM 3586 / NCPPB 528 / LMG 568 / P 25)</name>
    <dbReference type="NCBI Taxonomy" id="190485"/>
    <lineage>
        <taxon>Bacteria</taxon>
        <taxon>Pseudomonadati</taxon>
        <taxon>Pseudomonadota</taxon>
        <taxon>Gammaproteobacteria</taxon>
        <taxon>Lysobacterales</taxon>
        <taxon>Lysobacteraceae</taxon>
        <taxon>Xanthomonas</taxon>
    </lineage>
</organism>
<reference key="1">
    <citation type="journal article" date="2002" name="Nature">
        <title>Comparison of the genomes of two Xanthomonas pathogens with differing host specificities.</title>
        <authorList>
            <person name="da Silva A.C.R."/>
            <person name="Ferro J.A."/>
            <person name="Reinach F.C."/>
            <person name="Farah C.S."/>
            <person name="Furlan L.R."/>
            <person name="Quaggio R.B."/>
            <person name="Monteiro-Vitorello C.B."/>
            <person name="Van Sluys M.A."/>
            <person name="Almeida N.F. Jr."/>
            <person name="Alves L.M.C."/>
            <person name="do Amaral A.M."/>
            <person name="Bertolini M.C."/>
            <person name="Camargo L.E.A."/>
            <person name="Camarotte G."/>
            <person name="Cannavan F."/>
            <person name="Cardozo J."/>
            <person name="Chambergo F."/>
            <person name="Ciapina L.P."/>
            <person name="Cicarelli R.M.B."/>
            <person name="Coutinho L.L."/>
            <person name="Cursino-Santos J.R."/>
            <person name="El-Dorry H."/>
            <person name="Faria J.B."/>
            <person name="Ferreira A.J.S."/>
            <person name="Ferreira R.C.C."/>
            <person name="Ferro M.I.T."/>
            <person name="Formighieri E.F."/>
            <person name="Franco M.C."/>
            <person name="Greggio C.C."/>
            <person name="Gruber A."/>
            <person name="Katsuyama A.M."/>
            <person name="Kishi L.T."/>
            <person name="Leite R.P."/>
            <person name="Lemos E.G.M."/>
            <person name="Lemos M.V.F."/>
            <person name="Locali E.C."/>
            <person name="Machado M.A."/>
            <person name="Madeira A.M.B.N."/>
            <person name="Martinez-Rossi N.M."/>
            <person name="Martins E.C."/>
            <person name="Meidanis J."/>
            <person name="Menck C.F.M."/>
            <person name="Miyaki C.Y."/>
            <person name="Moon D.H."/>
            <person name="Moreira L.M."/>
            <person name="Novo M.T.M."/>
            <person name="Okura V.K."/>
            <person name="Oliveira M.C."/>
            <person name="Oliveira V.R."/>
            <person name="Pereira H.A."/>
            <person name="Rossi A."/>
            <person name="Sena J.A.D."/>
            <person name="Silva C."/>
            <person name="de Souza R.F."/>
            <person name="Spinola L.A.F."/>
            <person name="Takita M.A."/>
            <person name="Tamura R.E."/>
            <person name="Teixeira E.C."/>
            <person name="Tezza R.I.D."/>
            <person name="Trindade dos Santos M."/>
            <person name="Truffi D."/>
            <person name="Tsai S.M."/>
            <person name="White F.F."/>
            <person name="Setubal J.C."/>
            <person name="Kitajima J.P."/>
        </authorList>
    </citation>
    <scope>NUCLEOTIDE SEQUENCE [LARGE SCALE GENOMIC DNA]</scope>
    <source>
        <strain>ATCC 33913 / DSM 3586 / NCPPB 528 / LMG 568 / P 25</strain>
    </source>
</reference>
<sequence>MGSETTAAGDALDALDWNKGDGLLPVIVQDADNLRVLMLGYMNAEALAVTRARGEVTFFSRSKQRLWTKGESSGNVLRVVAIETDCDADTLLVQARPHGPTCHLGRTSCFPTAPSQFLGSLDALIAEREHERPHGSYTTKLFEQGIRRIAQKVGEEGVETALAGVVQGDAELLGESADLLYHLIVLLRARGLGLGDAVALLESRHK</sequence>
<name>HIS2_XANCP</name>
<accession>Q8P9N8</accession>
<comment type="catalytic activity">
    <reaction evidence="1">
        <text>1-(5-phospho-beta-D-ribosyl)-ATP + H2O = 1-(5-phospho-beta-D-ribosyl)-5'-AMP + diphosphate + H(+)</text>
        <dbReference type="Rhea" id="RHEA:22828"/>
        <dbReference type="ChEBI" id="CHEBI:15377"/>
        <dbReference type="ChEBI" id="CHEBI:15378"/>
        <dbReference type="ChEBI" id="CHEBI:33019"/>
        <dbReference type="ChEBI" id="CHEBI:59457"/>
        <dbReference type="ChEBI" id="CHEBI:73183"/>
        <dbReference type="EC" id="3.6.1.31"/>
    </reaction>
</comment>
<comment type="catalytic activity">
    <reaction evidence="1">
        <text>1-(5-phospho-beta-D-ribosyl)-5'-AMP + H2O = 1-(5-phospho-beta-D-ribosyl)-5-[(5-phospho-beta-D-ribosylamino)methylideneamino]imidazole-4-carboxamide</text>
        <dbReference type="Rhea" id="RHEA:20049"/>
        <dbReference type="ChEBI" id="CHEBI:15377"/>
        <dbReference type="ChEBI" id="CHEBI:58435"/>
        <dbReference type="ChEBI" id="CHEBI:59457"/>
        <dbReference type="EC" id="3.5.4.19"/>
    </reaction>
</comment>
<comment type="pathway">
    <text evidence="1">Amino-acid biosynthesis; L-histidine biosynthesis; L-histidine from 5-phospho-alpha-D-ribose 1-diphosphate: step 2/9.</text>
</comment>
<comment type="pathway">
    <text evidence="1">Amino-acid biosynthesis; L-histidine biosynthesis; L-histidine from 5-phospho-alpha-D-ribose 1-diphosphate: step 3/9.</text>
</comment>
<comment type="subcellular location">
    <subcellularLocation>
        <location evidence="1">Cytoplasm</location>
    </subcellularLocation>
</comment>
<comment type="similarity">
    <text evidence="1">In the N-terminal section; belongs to the PRA-CH family.</text>
</comment>
<comment type="similarity">
    <text evidence="1">In the C-terminal section; belongs to the PRA-PH family.</text>
</comment>
<proteinExistence type="inferred from homology"/>
<dbReference type="EC" id="3.5.4.19" evidence="1"/>
<dbReference type="EC" id="3.6.1.31" evidence="1"/>
<dbReference type="EMBL" id="AE008922">
    <property type="protein sequence ID" value="AAM41104.1"/>
    <property type="molecule type" value="Genomic_DNA"/>
</dbReference>
<dbReference type="RefSeq" id="NP_637180.1">
    <property type="nucleotide sequence ID" value="NC_003902.1"/>
</dbReference>
<dbReference type="RefSeq" id="WP_011036985.1">
    <property type="nucleotide sequence ID" value="NC_003902.1"/>
</dbReference>
<dbReference type="SMR" id="Q8P9N8"/>
<dbReference type="STRING" id="190485.XCC1815"/>
<dbReference type="EnsemblBacteria" id="AAM41104">
    <property type="protein sequence ID" value="AAM41104"/>
    <property type="gene ID" value="XCC1815"/>
</dbReference>
<dbReference type="KEGG" id="xcc:XCC1815"/>
<dbReference type="PATRIC" id="fig|190485.4.peg.1935"/>
<dbReference type="eggNOG" id="COG0139">
    <property type="taxonomic scope" value="Bacteria"/>
</dbReference>
<dbReference type="eggNOG" id="COG0140">
    <property type="taxonomic scope" value="Bacteria"/>
</dbReference>
<dbReference type="HOGENOM" id="CLU_048577_3_1_6"/>
<dbReference type="OrthoDB" id="9795769at2"/>
<dbReference type="UniPathway" id="UPA00031">
    <property type="reaction ID" value="UER00007"/>
</dbReference>
<dbReference type="UniPathway" id="UPA00031">
    <property type="reaction ID" value="UER00008"/>
</dbReference>
<dbReference type="Proteomes" id="UP000001010">
    <property type="component" value="Chromosome"/>
</dbReference>
<dbReference type="GO" id="GO:0005737">
    <property type="term" value="C:cytoplasm"/>
    <property type="evidence" value="ECO:0007669"/>
    <property type="project" value="UniProtKB-SubCell"/>
</dbReference>
<dbReference type="GO" id="GO:0005524">
    <property type="term" value="F:ATP binding"/>
    <property type="evidence" value="ECO:0007669"/>
    <property type="project" value="UniProtKB-KW"/>
</dbReference>
<dbReference type="GO" id="GO:0004635">
    <property type="term" value="F:phosphoribosyl-AMP cyclohydrolase activity"/>
    <property type="evidence" value="ECO:0007669"/>
    <property type="project" value="UniProtKB-UniRule"/>
</dbReference>
<dbReference type="GO" id="GO:0004636">
    <property type="term" value="F:phosphoribosyl-ATP diphosphatase activity"/>
    <property type="evidence" value="ECO:0007669"/>
    <property type="project" value="UniProtKB-UniRule"/>
</dbReference>
<dbReference type="GO" id="GO:0000105">
    <property type="term" value="P:L-histidine biosynthetic process"/>
    <property type="evidence" value="ECO:0007669"/>
    <property type="project" value="UniProtKB-UniRule"/>
</dbReference>
<dbReference type="CDD" id="cd11534">
    <property type="entry name" value="NTP-PPase_HisIE_like"/>
    <property type="match status" value="1"/>
</dbReference>
<dbReference type="FunFam" id="3.10.20.810:FF:000001">
    <property type="entry name" value="Histidine biosynthesis bifunctional protein HisIE"/>
    <property type="match status" value="1"/>
</dbReference>
<dbReference type="Gene3D" id="1.10.287.1080">
    <property type="entry name" value="MazG-like"/>
    <property type="match status" value="1"/>
</dbReference>
<dbReference type="Gene3D" id="3.10.20.810">
    <property type="entry name" value="Phosphoribosyl-AMP cyclohydrolase"/>
    <property type="match status" value="1"/>
</dbReference>
<dbReference type="HAMAP" id="MF_01020">
    <property type="entry name" value="HisE"/>
    <property type="match status" value="1"/>
</dbReference>
<dbReference type="HAMAP" id="MF_01019">
    <property type="entry name" value="HisIE"/>
    <property type="match status" value="1"/>
</dbReference>
<dbReference type="InterPro" id="IPR023019">
    <property type="entry name" value="His_synth_HisIE"/>
</dbReference>
<dbReference type="InterPro" id="IPR008179">
    <property type="entry name" value="HisE"/>
</dbReference>
<dbReference type="InterPro" id="IPR021130">
    <property type="entry name" value="PRib-ATP_PPHydrolase-like"/>
</dbReference>
<dbReference type="InterPro" id="IPR002496">
    <property type="entry name" value="PRib_AMP_CycHydrolase_dom"/>
</dbReference>
<dbReference type="InterPro" id="IPR038019">
    <property type="entry name" value="PRib_AMP_CycHydrolase_sf"/>
</dbReference>
<dbReference type="NCBIfam" id="TIGR03188">
    <property type="entry name" value="histidine_hisI"/>
    <property type="match status" value="1"/>
</dbReference>
<dbReference type="NCBIfam" id="NF000768">
    <property type="entry name" value="PRK00051.1"/>
    <property type="match status" value="1"/>
</dbReference>
<dbReference type="NCBIfam" id="NF002747">
    <property type="entry name" value="PRK02759.1"/>
    <property type="match status" value="1"/>
</dbReference>
<dbReference type="PANTHER" id="PTHR42945">
    <property type="entry name" value="HISTIDINE BIOSYNTHESIS BIFUNCTIONAL PROTEIN"/>
    <property type="match status" value="1"/>
</dbReference>
<dbReference type="PANTHER" id="PTHR42945:SF9">
    <property type="entry name" value="HISTIDINE BIOSYNTHESIS BIFUNCTIONAL PROTEIN HISIE"/>
    <property type="match status" value="1"/>
</dbReference>
<dbReference type="Pfam" id="PF01502">
    <property type="entry name" value="PRA-CH"/>
    <property type="match status" value="1"/>
</dbReference>
<dbReference type="Pfam" id="PF01503">
    <property type="entry name" value="PRA-PH"/>
    <property type="match status" value="1"/>
</dbReference>
<dbReference type="SUPFAM" id="SSF101386">
    <property type="entry name" value="all-alpha NTP pyrophosphatases"/>
    <property type="match status" value="1"/>
</dbReference>
<dbReference type="SUPFAM" id="SSF141734">
    <property type="entry name" value="HisI-like"/>
    <property type="match status" value="1"/>
</dbReference>
<gene>
    <name evidence="1" type="primary">hisI</name>
    <name evidence="1" type="synonym">hisIE</name>
    <name type="ordered locus">XCC1815</name>
</gene>
<feature type="chain" id="PRO_0000136451" description="Histidine biosynthesis bifunctional protein HisIE">
    <location>
        <begin position="1"/>
        <end position="206"/>
    </location>
</feature>
<feature type="region of interest" description="Phosphoribosyl-AMP cyclohydrolase">
    <location>
        <begin position="1"/>
        <end position="117"/>
    </location>
</feature>
<feature type="region of interest" description="Phosphoribosyl-ATP pyrophosphohydrolase">
    <location>
        <begin position="118"/>
        <end position="206"/>
    </location>
</feature>